<comment type="function">
    <text evidence="1">Catalyzes the isomerization of 5-dehydro-4-deoxy-D-glucuronate to 3-deoxy-D-glycero-2,5-hexodiulosonate.</text>
</comment>
<comment type="catalytic activity">
    <reaction evidence="1">
        <text>5-dehydro-4-deoxy-D-glucuronate = 3-deoxy-D-glycero-2,5-hexodiulosonate</text>
        <dbReference type="Rhea" id="RHEA:23896"/>
        <dbReference type="ChEBI" id="CHEBI:17117"/>
        <dbReference type="ChEBI" id="CHEBI:29071"/>
        <dbReference type="EC" id="5.3.1.17"/>
    </reaction>
</comment>
<comment type="cofactor">
    <cofactor evidence="1">
        <name>Zn(2+)</name>
        <dbReference type="ChEBI" id="CHEBI:29105"/>
    </cofactor>
    <text evidence="1">Binds 1 zinc ion per subunit.</text>
</comment>
<comment type="pathway">
    <text evidence="1">Glycan metabolism; pectin degradation; 2-dehydro-3-deoxy-D-gluconate from pectin: step 4/5.</text>
</comment>
<comment type="similarity">
    <text evidence="1">Belongs to the KduI family.</text>
</comment>
<sequence>MDVRQSIHGAHAKTLDTQGLRNEFLVEKVFVADEYTMVYSHIDRIIVGGIMPITKTVSVGGEVGKQLGVSYFLERRELGVINIGGAGTITVDGQCYEIGHRDALYVGKGAKEVVFASIDTATPAKFYYNCAPAHTTYPTKKVTPDEVSPVTLGDNLTSNRRTINKYFVPDVLETCQLSMGLTELAPGNLWNTMPCHTHERRMEVYFYFNMDDDACVFHMMGQPQETRHIVMHNEQAVISPSWSIHSGVGTKAYTFIWGMVGENQVFNDMDHVGVKDLR</sequence>
<reference key="1">
    <citation type="journal article" date="2002" name="Nucleic Acids Res.">
        <title>Genome sequence of Shigella flexneri 2a: insights into pathogenicity through comparison with genomes of Escherichia coli K12 and O157.</title>
        <authorList>
            <person name="Jin Q."/>
            <person name="Yuan Z."/>
            <person name="Xu J."/>
            <person name="Wang Y."/>
            <person name="Shen Y."/>
            <person name="Lu W."/>
            <person name="Wang J."/>
            <person name="Liu H."/>
            <person name="Yang J."/>
            <person name="Yang F."/>
            <person name="Zhang X."/>
            <person name="Zhang J."/>
            <person name="Yang G."/>
            <person name="Wu H."/>
            <person name="Qu D."/>
            <person name="Dong J."/>
            <person name="Sun L."/>
            <person name="Xue Y."/>
            <person name="Zhao A."/>
            <person name="Gao Y."/>
            <person name="Zhu J."/>
            <person name="Kan B."/>
            <person name="Ding K."/>
            <person name="Chen S."/>
            <person name="Cheng H."/>
            <person name="Yao Z."/>
            <person name="He B."/>
            <person name="Chen R."/>
            <person name="Ma D."/>
            <person name="Qiang B."/>
            <person name="Wen Y."/>
            <person name="Hou Y."/>
            <person name="Yu J."/>
        </authorList>
    </citation>
    <scope>NUCLEOTIDE SEQUENCE [LARGE SCALE GENOMIC DNA]</scope>
    <source>
        <strain>301 / Serotype 2a</strain>
    </source>
</reference>
<reference key="2">
    <citation type="journal article" date="2003" name="Infect. Immun.">
        <title>Complete genome sequence and comparative genomics of Shigella flexneri serotype 2a strain 2457T.</title>
        <authorList>
            <person name="Wei J."/>
            <person name="Goldberg M.B."/>
            <person name="Burland V."/>
            <person name="Venkatesan M.M."/>
            <person name="Deng W."/>
            <person name="Fournier G."/>
            <person name="Mayhew G.F."/>
            <person name="Plunkett G. III"/>
            <person name="Rose D.J."/>
            <person name="Darling A."/>
            <person name="Mau B."/>
            <person name="Perna N.T."/>
            <person name="Payne S.M."/>
            <person name="Runyen-Janecky L.J."/>
            <person name="Zhou S."/>
            <person name="Schwartz D.C."/>
            <person name="Blattner F.R."/>
        </authorList>
    </citation>
    <scope>NUCLEOTIDE SEQUENCE [LARGE SCALE GENOMIC DNA]</scope>
    <source>
        <strain>ATCC 700930 / 2457T / Serotype 2a</strain>
    </source>
</reference>
<accession>Q83QB2</accession>
<name>KDUI_SHIFL</name>
<gene>
    <name evidence="1" type="primary">kduI</name>
    <name type="ordered locus">SF2853</name>
    <name type="ordered locus">S3051</name>
</gene>
<dbReference type="EC" id="5.3.1.17" evidence="1"/>
<dbReference type="EMBL" id="AE005674">
    <property type="protein sequence ID" value="AAN44339.1"/>
    <property type="molecule type" value="Genomic_DNA"/>
</dbReference>
<dbReference type="EMBL" id="AE014073">
    <property type="protein sequence ID" value="AAP18165.1"/>
    <property type="molecule type" value="Genomic_DNA"/>
</dbReference>
<dbReference type="RefSeq" id="NP_708632.1">
    <property type="nucleotide sequence ID" value="NC_004337.2"/>
</dbReference>
<dbReference type="RefSeq" id="WP_000383214.1">
    <property type="nucleotide sequence ID" value="NZ_WPGW01000008.1"/>
</dbReference>
<dbReference type="SMR" id="Q83QB2"/>
<dbReference type="STRING" id="198214.SF2853"/>
<dbReference type="PaxDb" id="198214-SF2853"/>
<dbReference type="GeneID" id="1025798"/>
<dbReference type="KEGG" id="sfl:SF2853"/>
<dbReference type="KEGG" id="sfx:S3051"/>
<dbReference type="PATRIC" id="fig|198214.7.peg.3394"/>
<dbReference type="HOGENOM" id="CLU_062609_0_0_6"/>
<dbReference type="UniPathway" id="UPA00545">
    <property type="reaction ID" value="UER00826"/>
</dbReference>
<dbReference type="Proteomes" id="UP000001006">
    <property type="component" value="Chromosome"/>
</dbReference>
<dbReference type="Proteomes" id="UP000002673">
    <property type="component" value="Chromosome"/>
</dbReference>
<dbReference type="GO" id="GO:0008697">
    <property type="term" value="F:4-deoxy-L-threo-5-hexosulose-uronate ketol-isomerase activity"/>
    <property type="evidence" value="ECO:0007669"/>
    <property type="project" value="UniProtKB-UniRule"/>
</dbReference>
<dbReference type="GO" id="GO:0008270">
    <property type="term" value="F:zinc ion binding"/>
    <property type="evidence" value="ECO:0007669"/>
    <property type="project" value="UniProtKB-UniRule"/>
</dbReference>
<dbReference type="GO" id="GO:0019698">
    <property type="term" value="P:D-galacturonate catabolic process"/>
    <property type="evidence" value="ECO:0007669"/>
    <property type="project" value="TreeGrafter"/>
</dbReference>
<dbReference type="GO" id="GO:0042840">
    <property type="term" value="P:D-glucuronate catabolic process"/>
    <property type="evidence" value="ECO:0007669"/>
    <property type="project" value="TreeGrafter"/>
</dbReference>
<dbReference type="GO" id="GO:0045490">
    <property type="term" value="P:pectin catabolic process"/>
    <property type="evidence" value="ECO:0007669"/>
    <property type="project" value="UniProtKB-UniRule"/>
</dbReference>
<dbReference type="CDD" id="cd20491">
    <property type="entry name" value="cupin_KduI_C"/>
    <property type="match status" value="1"/>
</dbReference>
<dbReference type="CDD" id="cd20294">
    <property type="entry name" value="cupin_KduI_N"/>
    <property type="match status" value="1"/>
</dbReference>
<dbReference type="FunFam" id="2.60.120.10:FF:000018">
    <property type="entry name" value="4-deoxy-L-threo-5-hexosulose-uronate ketol-isomerase"/>
    <property type="match status" value="1"/>
</dbReference>
<dbReference type="FunFam" id="2.60.120.520:FF:000001">
    <property type="entry name" value="4-deoxy-L-threo-5-hexosulose-uronate ketol-isomerase"/>
    <property type="match status" value="1"/>
</dbReference>
<dbReference type="Gene3D" id="2.60.120.10">
    <property type="entry name" value="Jelly Rolls"/>
    <property type="match status" value="1"/>
</dbReference>
<dbReference type="Gene3D" id="2.60.120.520">
    <property type="entry name" value="pectin degrading enzyme 5-keto 4- deoxyuronate isomerase, domain 1"/>
    <property type="match status" value="1"/>
</dbReference>
<dbReference type="HAMAP" id="MF_00687">
    <property type="entry name" value="KduI"/>
    <property type="match status" value="1"/>
</dbReference>
<dbReference type="InterPro" id="IPR007045">
    <property type="entry name" value="KduI"/>
</dbReference>
<dbReference type="InterPro" id="IPR021120">
    <property type="entry name" value="KduI/IolB_isomerase"/>
</dbReference>
<dbReference type="InterPro" id="IPR027449">
    <property type="entry name" value="KduI_N"/>
</dbReference>
<dbReference type="InterPro" id="IPR014710">
    <property type="entry name" value="RmlC-like_jellyroll"/>
</dbReference>
<dbReference type="InterPro" id="IPR011051">
    <property type="entry name" value="RmlC_Cupin_sf"/>
</dbReference>
<dbReference type="NCBIfam" id="NF002091">
    <property type="entry name" value="PRK00924.1"/>
    <property type="match status" value="1"/>
</dbReference>
<dbReference type="PANTHER" id="PTHR38461">
    <property type="entry name" value="4-DEOXY-L-THREO-5-HEXOSULOSE-URONATE KETOL-ISOMERASE"/>
    <property type="match status" value="1"/>
</dbReference>
<dbReference type="PANTHER" id="PTHR38461:SF1">
    <property type="entry name" value="4-DEOXY-L-THREO-5-HEXOSULOSE-URONATE KETOL-ISOMERASE"/>
    <property type="match status" value="1"/>
</dbReference>
<dbReference type="Pfam" id="PF04962">
    <property type="entry name" value="KduI"/>
    <property type="match status" value="1"/>
</dbReference>
<dbReference type="PIRSF" id="PIRSF006625">
    <property type="entry name" value="KduI"/>
    <property type="match status" value="1"/>
</dbReference>
<dbReference type="SUPFAM" id="SSF51182">
    <property type="entry name" value="RmlC-like cupins"/>
    <property type="match status" value="1"/>
</dbReference>
<proteinExistence type="inferred from homology"/>
<feature type="chain" id="PRO_0000215497" description="4-deoxy-L-threo-5-hexosulose-uronate ketol-isomerase">
    <location>
        <begin position="1"/>
        <end position="278"/>
    </location>
</feature>
<feature type="binding site" evidence="1">
    <location>
        <position position="196"/>
    </location>
    <ligand>
        <name>Zn(2+)</name>
        <dbReference type="ChEBI" id="CHEBI:29105"/>
    </ligand>
</feature>
<feature type="binding site" evidence="1">
    <location>
        <position position="198"/>
    </location>
    <ligand>
        <name>Zn(2+)</name>
        <dbReference type="ChEBI" id="CHEBI:29105"/>
    </ligand>
</feature>
<feature type="binding site" evidence="1">
    <location>
        <position position="203"/>
    </location>
    <ligand>
        <name>Zn(2+)</name>
        <dbReference type="ChEBI" id="CHEBI:29105"/>
    </ligand>
</feature>
<feature type="binding site" evidence="1">
    <location>
        <position position="245"/>
    </location>
    <ligand>
        <name>Zn(2+)</name>
        <dbReference type="ChEBI" id="CHEBI:29105"/>
    </ligand>
</feature>
<keyword id="KW-0413">Isomerase</keyword>
<keyword id="KW-0479">Metal-binding</keyword>
<keyword id="KW-1185">Reference proteome</keyword>
<keyword id="KW-0862">Zinc</keyword>
<organism>
    <name type="scientific">Shigella flexneri</name>
    <dbReference type="NCBI Taxonomy" id="623"/>
    <lineage>
        <taxon>Bacteria</taxon>
        <taxon>Pseudomonadati</taxon>
        <taxon>Pseudomonadota</taxon>
        <taxon>Gammaproteobacteria</taxon>
        <taxon>Enterobacterales</taxon>
        <taxon>Enterobacteriaceae</taxon>
        <taxon>Shigella</taxon>
    </lineage>
</organism>
<evidence type="ECO:0000255" key="1">
    <source>
        <dbReference type="HAMAP-Rule" id="MF_00687"/>
    </source>
</evidence>
<protein>
    <recommendedName>
        <fullName evidence="1">4-deoxy-L-threo-5-hexosulose-uronate ketol-isomerase</fullName>
        <ecNumber evidence="1">5.3.1.17</ecNumber>
    </recommendedName>
    <alternativeName>
        <fullName evidence="1">5-keto-4-deoxyuronate isomerase</fullName>
    </alternativeName>
    <alternativeName>
        <fullName evidence="1">DKI isomerase</fullName>
    </alternativeName>
</protein>